<comment type="function">
    <text evidence="1">Formation of pseudouridine at positions 38, 39 and 40 in the anticodon stem and loop of transfer RNAs.</text>
</comment>
<comment type="catalytic activity">
    <reaction evidence="1">
        <text>uridine(38/39/40) in tRNA = pseudouridine(38/39/40) in tRNA</text>
        <dbReference type="Rhea" id="RHEA:22376"/>
        <dbReference type="Rhea" id="RHEA-COMP:10085"/>
        <dbReference type="Rhea" id="RHEA-COMP:10087"/>
        <dbReference type="ChEBI" id="CHEBI:65314"/>
        <dbReference type="ChEBI" id="CHEBI:65315"/>
        <dbReference type="EC" id="5.4.99.12"/>
    </reaction>
</comment>
<comment type="subunit">
    <text evidence="1">Homodimer.</text>
</comment>
<comment type="similarity">
    <text evidence="1">Belongs to the tRNA pseudouridine synthase TruA family.</text>
</comment>
<feature type="chain" id="PRO_1000017197" description="tRNA pseudouridine synthase A">
    <location>
        <begin position="1"/>
        <end position="249"/>
    </location>
</feature>
<feature type="active site" description="Nucleophile" evidence="1">
    <location>
        <position position="53"/>
    </location>
</feature>
<feature type="binding site" evidence="1">
    <location>
        <position position="111"/>
    </location>
    <ligand>
        <name>substrate</name>
    </ligand>
</feature>
<sequence length="249" mass="28356">MVRYKATISYDGTLFSGFQRQRHLRTVQEEIEKTLYKLNNGTKIIIHGAGRTDAGVHAYGQVIHFDLPQEQEVEKLRFALDTQTPEDIDVVNIEKVADDFHCRYQKHLKTYEFLVDNGRPKNPMMRHYTTHYPYTLNIKLMQEAINGLVGTHDFTGFTAAGTSVQNKVRTITKATVSRDEKTDFLVFTFSGNGFLYKQVRNMVGTLLKIGNGQMPVEQVKVILSSKNRQLAGPTISGNGLYLKEICYEN</sequence>
<evidence type="ECO:0000255" key="1">
    <source>
        <dbReference type="HAMAP-Rule" id="MF_00171"/>
    </source>
</evidence>
<dbReference type="EC" id="5.4.99.12" evidence="1"/>
<dbReference type="EMBL" id="CP000056">
    <property type="protein sequence ID" value="AAX72716.1"/>
    <property type="molecule type" value="Genomic_DNA"/>
</dbReference>
<dbReference type="RefSeq" id="WP_002988132.1">
    <property type="nucleotide sequence ID" value="NC_007296.2"/>
</dbReference>
<dbReference type="SMR" id="Q48RE4"/>
<dbReference type="KEGG" id="spb:M28_Spy1606"/>
<dbReference type="HOGENOM" id="CLU_014673_0_1_9"/>
<dbReference type="GO" id="GO:0003723">
    <property type="term" value="F:RNA binding"/>
    <property type="evidence" value="ECO:0007669"/>
    <property type="project" value="InterPro"/>
</dbReference>
<dbReference type="GO" id="GO:0160147">
    <property type="term" value="F:tRNA pseudouridine(38-40) synthase activity"/>
    <property type="evidence" value="ECO:0007669"/>
    <property type="project" value="UniProtKB-EC"/>
</dbReference>
<dbReference type="GO" id="GO:0031119">
    <property type="term" value="P:tRNA pseudouridine synthesis"/>
    <property type="evidence" value="ECO:0007669"/>
    <property type="project" value="UniProtKB-UniRule"/>
</dbReference>
<dbReference type="CDD" id="cd02570">
    <property type="entry name" value="PseudoU_synth_EcTruA"/>
    <property type="match status" value="1"/>
</dbReference>
<dbReference type="FunFam" id="3.30.70.580:FF:000001">
    <property type="entry name" value="tRNA pseudouridine synthase A"/>
    <property type="match status" value="1"/>
</dbReference>
<dbReference type="Gene3D" id="3.30.70.660">
    <property type="entry name" value="Pseudouridine synthase I, catalytic domain, C-terminal subdomain"/>
    <property type="match status" value="1"/>
</dbReference>
<dbReference type="Gene3D" id="3.30.70.580">
    <property type="entry name" value="Pseudouridine synthase I, catalytic domain, N-terminal subdomain"/>
    <property type="match status" value="1"/>
</dbReference>
<dbReference type="HAMAP" id="MF_00171">
    <property type="entry name" value="TruA"/>
    <property type="match status" value="1"/>
</dbReference>
<dbReference type="InterPro" id="IPR020103">
    <property type="entry name" value="PsdUridine_synth_cat_dom_sf"/>
</dbReference>
<dbReference type="InterPro" id="IPR001406">
    <property type="entry name" value="PsdUridine_synth_TruA"/>
</dbReference>
<dbReference type="InterPro" id="IPR020097">
    <property type="entry name" value="PsdUridine_synth_TruA_a/b_dom"/>
</dbReference>
<dbReference type="InterPro" id="IPR020095">
    <property type="entry name" value="PsdUridine_synth_TruA_C"/>
</dbReference>
<dbReference type="InterPro" id="IPR020094">
    <property type="entry name" value="TruA/RsuA/RluB/E/F_N"/>
</dbReference>
<dbReference type="NCBIfam" id="TIGR00071">
    <property type="entry name" value="hisT_truA"/>
    <property type="match status" value="1"/>
</dbReference>
<dbReference type="PANTHER" id="PTHR11142">
    <property type="entry name" value="PSEUDOURIDYLATE SYNTHASE"/>
    <property type="match status" value="1"/>
</dbReference>
<dbReference type="PANTHER" id="PTHR11142:SF0">
    <property type="entry name" value="TRNA PSEUDOURIDINE SYNTHASE-LIKE 1"/>
    <property type="match status" value="1"/>
</dbReference>
<dbReference type="Pfam" id="PF01416">
    <property type="entry name" value="PseudoU_synth_1"/>
    <property type="match status" value="2"/>
</dbReference>
<dbReference type="PIRSF" id="PIRSF001430">
    <property type="entry name" value="tRNA_psdUrid_synth"/>
    <property type="match status" value="1"/>
</dbReference>
<dbReference type="SUPFAM" id="SSF55120">
    <property type="entry name" value="Pseudouridine synthase"/>
    <property type="match status" value="1"/>
</dbReference>
<gene>
    <name evidence="1" type="primary">truA</name>
    <name type="ordered locus">M28_Spy1606</name>
</gene>
<name>TRUA_STRPM</name>
<keyword id="KW-0413">Isomerase</keyword>
<keyword id="KW-0819">tRNA processing</keyword>
<protein>
    <recommendedName>
        <fullName evidence="1">tRNA pseudouridine synthase A</fullName>
        <ecNumber evidence="1">5.4.99.12</ecNumber>
    </recommendedName>
    <alternativeName>
        <fullName evidence="1">tRNA pseudouridine(38-40) synthase</fullName>
    </alternativeName>
    <alternativeName>
        <fullName evidence="1">tRNA pseudouridylate synthase I</fullName>
    </alternativeName>
    <alternativeName>
        <fullName evidence="1">tRNA-uridine isomerase I</fullName>
    </alternativeName>
</protein>
<accession>Q48RE4</accession>
<proteinExistence type="inferred from homology"/>
<organism>
    <name type="scientific">Streptococcus pyogenes serotype M28 (strain MGAS6180)</name>
    <dbReference type="NCBI Taxonomy" id="319701"/>
    <lineage>
        <taxon>Bacteria</taxon>
        <taxon>Bacillati</taxon>
        <taxon>Bacillota</taxon>
        <taxon>Bacilli</taxon>
        <taxon>Lactobacillales</taxon>
        <taxon>Streptococcaceae</taxon>
        <taxon>Streptococcus</taxon>
    </lineage>
</organism>
<reference key="1">
    <citation type="journal article" date="2005" name="J. Infect. Dis.">
        <title>Genome sequence of a serotype M28 strain of group A Streptococcus: potential new insights into puerperal sepsis and bacterial disease specificity.</title>
        <authorList>
            <person name="Green N.M."/>
            <person name="Zhang S."/>
            <person name="Porcella S.F."/>
            <person name="Nagiec M.J."/>
            <person name="Barbian K.D."/>
            <person name="Beres S.B."/>
            <person name="Lefebvre R.B."/>
            <person name="Musser J.M."/>
        </authorList>
    </citation>
    <scope>NUCLEOTIDE SEQUENCE [LARGE SCALE GENOMIC DNA]</scope>
    <source>
        <strain>MGAS6180</strain>
    </source>
</reference>